<proteinExistence type="evidence at protein level"/>
<feature type="chain" id="PRO_0000452981" description="Bowman-Birk type proteinase inhibitor B5">
    <location>
        <begin position="1"/>
        <end position="61"/>
    </location>
</feature>
<feature type="site" description="Reactive bond for trypsin" evidence="1">
    <location>
        <begin position="14"/>
        <end position="15"/>
    </location>
</feature>
<feature type="disulfide bond" evidence="1">
    <location>
        <begin position="5"/>
        <end position="60"/>
    </location>
</feature>
<feature type="disulfide bond" evidence="1">
    <location>
        <begin position="6"/>
        <end position="22"/>
    </location>
</feature>
<feature type="disulfide bond" evidence="1">
    <location>
        <begin position="9"/>
        <end position="56"/>
    </location>
</feature>
<feature type="disulfide bond" evidence="1">
    <location>
        <begin position="12"/>
        <end position="20"/>
    </location>
</feature>
<feature type="disulfide bond" evidence="1">
    <location>
        <begin position="29"/>
        <end position="36"/>
    </location>
</feature>
<feature type="disulfide bond" evidence="1">
    <location>
        <begin position="33"/>
        <end position="48"/>
    </location>
</feature>
<name>IBBB5_HYAOR</name>
<sequence>GRRPCCNECGICDRSLDPMCICEDLVPQCHEGCQACEEVDTGTPMYQCRSFEYYHCGTPCL</sequence>
<organism>
    <name type="scientific">Hyacinthus orientalis</name>
    <name type="common">Common hyacinth</name>
    <dbReference type="NCBI Taxonomy" id="82025"/>
    <lineage>
        <taxon>Eukaryota</taxon>
        <taxon>Viridiplantae</taxon>
        <taxon>Streptophyta</taxon>
        <taxon>Embryophyta</taxon>
        <taxon>Tracheophyta</taxon>
        <taxon>Spermatophyta</taxon>
        <taxon>Magnoliopsida</taxon>
        <taxon>Liliopsida</taxon>
        <taxon>Asparagales</taxon>
        <taxon>Hyacinthaceae</taxon>
        <taxon>Hyacinthoideae</taxon>
        <taxon>Hyacintheae</taxon>
        <taxon>Hyacinthus</taxon>
    </lineage>
</organism>
<accession>C0HLT1</accession>
<evidence type="ECO:0000250" key="1">
    <source>
        <dbReference type="UniProtKB" id="P80321"/>
    </source>
</evidence>
<evidence type="ECO:0000269" key="2">
    <source>
    </source>
</evidence>
<evidence type="ECO:0000303" key="3">
    <source>
    </source>
</evidence>
<evidence type="ECO:0000305" key="4"/>
<dbReference type="SMR" id="C0HLT1"/>
<dbReference type="GO" id="GO:0005576">
    <property type="term" value="C:extracellular region"/>
    <property type="evidence" value="ECO:0007669"/>
    <property type="project" value="InterPro"/>
</dbReference>
<dbReference type="GO" id="GO:0004867">
    <property type="term" value="F:serine-type endopeptidase inhibitor activity"/>
    <property type="evidence" value="ECO:0000314"/>
    <property type="project" value="UniProtKB"/>
</dbReference>
<dbReference type="GO" id="GO:0010951">
    <property type="term" value="P:negative regulation of endopeptidase activity"/>
    <property type="evidence" value="ECO:0000314"/>
    <property type="project" value="UniProtKB"/>
</dbReference>
<dbReference type="Gene3D" id="2.10.69.10">
    <property type="entry name" value="Cysteine Protease (Bromelain) Inhibitor, subunit H"/>
    <property type="match status" value="1"/>
</dbReference>
<dbReference type="InterPro" id="IPR035995">
    <property type="entry name" value="Bowman-Birk_prot_inh"/>
</dbReference>
<dbReference type="InterPro" id="IPR000877">
    <property type="entry name" value="Prot_inh_BBI"/>
</dbReference>
<dbReference type="Pfam" id="PF00228">
    <property type="entry name" value="Bowman-Birk_leg"/>
    <property type="match status" value="1"/>
</dbReference>
<dbReference type="SMART" id="SM00269">
    <property type="entry name" value="BowB"/>
    <property type="match status" value="1"/>
</dbReference>
<dbReference type="SUPFAM" id="SSF57247">
    <property type="entry name" value="Bowman-Birk inhibitor, BBI"/>
    <property type="match status" value="1"/>
</dbReference>
<comment type="function">
    <text evidence="2">Serine protease inhibitor (PubMed:33666645). Inhibits trypsin (Ki = 41 nM) and weakly inhibits chymotrypsin (Ki = 410 nM) (PubMed:33666645). Does not inhibit bacterial subtilisin (PubMed:33666645).</text>
</comment>
<comment type="tissue specificity">
    <text evidence="2">Expressed in bulb (at protein level).</text>
</comment>
<comment type="similarity">
    <text evidence="4">Belongs to the Bowman-Birk serine protease inhibitor family.</text>
</comment>
<protein>
    <recommendedName>
        <fullName evidence="3">Bowman-Birk type proteinase inhibitor B5</fullName>
        <shortName evidence="3">HOSPI-B5</shortName>
    </recommendedName>
</protein>
<reference key="1">
    <citation type="journal article" date="2021" name="Biochem. J.">
        <title>Isolation and functional diversity of Bowman-Birk type serine proteinase inhibitors from Hyacinthus orientalis.</title>
        <authorList>
            <person name="Aoki-Shioi N."/>
            <person name="Terada S."/>
            <person name="Hellinger R."/>
            <person name="Furuta Y."/>
            <person name="Gruber C.W."/>
        </authorList>
    </citation>
    <scope>PROTEIN SEQUENCE</scope>
    <scope>FUNCTION</scope>
    <scope>TISSUE SPECIFICITY</scope>
    <source>
        <tissue evidence="3">Bulb</tissue>
    </source>
</reference>
<keyword id="KW-0903">Direct protein sequencing</keyword>
<keyword id="KW-1015">Disulfide bond</keyword>
<keyword id="KW-0646">Protease inhibitor</keyword>
<keyword id="KW-0722">Serine protease inhibitor</keyword>